<evidence type="ECO:0000255" key="1">
    <source>
        <dbReference type="HAMAP-Rule" id="MF_00379"/>
    </source>
</evidence>
<protein>
    <recommendedName>
        <fullName evidence="1">tRNA modification GTPase MnmE</fullName>
        <ecNumber evidence="1">3.6.-.-</ecNumber>
    </recommendedName>
</protein>
<accession>A4STS4</accession>
<feature type="chain" id="PRO_1000048794" description="tRNA modification GTPase MnmE">
    <location>
        <begin position="1"/>
        <end position="453"/>
    </location>
</feature>
<feature type="domain" description="TrmE-type G">
    <location>
        <begin position="215"/>
        <end position="376"/>
    </location>
</feature>
<feature type="binding site" evidence="1">
    <location>
        <position position="22"/>
    </location>
    <ligand>
        <name>(6S)-5-formyl-5,6,7,8-tetrahydrofolate</name>
        <dbReference type="ChEBI" id="CHEBI:57457"/>
    </ligand>
</feature>
<feature type="binding site" evidence="1">
    <location>
        <position position="79"/>
    </location>
    <ligand>
        <name>(6S)-5-formyl-5,6,7,8-tetrahydrofolate</name>
        <dbReference type="ChEBI" id="CHEBI:57457"/>
    </ligand>
</feature>
<feature type="binding site" evidence="1">
    <location>
        <position position="119"/>
    </location>
    <ligand>
        <name>(6S)-5-formyl-5,6,7,8-tetrahydrofolate</name>
        <dbReference type="ChEBI" id="CHEBI:57457"/>
    </ligand>
</feature>
<feature type="binding site" evidence="1">
    <location>
        <begin position="225"/>
        <end position="230"/>
    </location>
    <ligand>
        <name>GTP</name>
        <dbReference type="ChEBI" id="CHEBI:37565"/>
    </ligand>
</feature>
<feature type="binding site" evidence="1">
    <location>
        <position position="225"/>
    </location>
    <ligand>
        <name>K(+)</name>
        <dbReference type="ChEBI" id="CHEBI:29103"/>
    </ligand>
</feature>
<feature type="binding site" evidence="1">
    <location>
        <position position="229"/>
    </location>
    <ligand>
        <name>Mg(2+)</name>
        <dbReference type="ChEBI" id="CHEBI:18420"/>
    </ligand>
</feature>
<feature type="binding site" evidence="1">
    <location>
        <begin position="244"/>
        <end position="250"/>
    </location>
    <ligand>
        <name>GTP</name>
        <dbReference type="ChEBI" id="CHEBI:37565"/>
    </ligand>
</feature>
<feature type="binding site" evidence="1">
    <location>
        <position position="244"/>
    </location>
    <ligand>
        <name>K(+)</name>
        <dbReference type="ChEBI" id="CHEBI:29103"/>
    </ligand>
</feature>
<feature type="binding site" evidence="1">
    <location>
        <position position="246"/>
    </location>
    <ligand>
        <name>K(+)</name>
        <dbReference type="ChEBI" id="CHEBI:29103"/>
    </ligand>
</feature>
<feature type="binding site" evidence="1">
    <location>
        <position position="249"/>
    </location>
    <ligand>
        <name>K(+)</name>
        <dbReference type="ChEBI" id="CHEBI:29103"/>
    </ligand>
</feature>
<feature type="binding site" evidence="1">
    <location>
        <position position="250"/>
    </location>
    <ligand>
        <name>Mg(2+)</name>
        <dbReference type="ChEBI" id="CHEBI:18420"/>
    </ligand>
</feature>
<feature type="binding site" evidence="1">
    <location>
        <begin position="269"/>
        <end position="272"/>
    </location>
    <ligand>
        <name>GTP</name>
        <dbReference type="ChEBI" id="CHEBI:37565"/>
    </ligand>
</feature>
<feature type="binding site" evidence="1">
    <location>
        <begin position="334"/>
        <end position="337"/>
    </location>
    <ligand>
        <name>GTP</name>
        <dbReference type="ChEBI" id="CHEBI:37565"/>
    </ligand>
</feature>
<feature type="binding site" evidence="1">
    <location>
        <position position="453"/>
    </location>
    <ligand>
        <name>(6S)-5-formyl-5,6,7,8-tetrahydrofolate</name>
        <dbReference type="ChEBI" id="CHEBI:57457"/>
    </ligand>
</feature>
<keyword id="KW-0963">Cytoplasm</keyword>
<keyword id="KW-0342">GTP-binding</keyword>
<keyword id="KW-0378">Hydrolase</keyword>
<keyword id="KW-0460">Magnesium</keyword>
<keyword id="KW-0479">Metal-binding</keyword>
<keyword id="KW-0547">Nucleotide-binding</keyword>
<keyword id="KW-0630">Potassium</keyword>
<keyword id="KW-0819">tRNA processing</keyword>
<gene>
    <name evidence="1" type="primary">mnmE</name>
    <name evidence="1" type="synonym">trmE</name>
    <name type="ordered locus">ASA_4381</name>
</gene>
<dbReference type="EC" id="3.6.-.-" evidence="1"/>
<dbReference type="EMBL" id="CP000644">
    <property type="protein sequence ID" value="ABO92296.1"/>
    <property type="molecule type" value="Genomic_DNA"/>
</dbReference>
<dbReference type="RefSeq" id="WP_005319560.1">
    <property type="nucleotide sequence ID" value="NC_009348.1"/>
</dbReference>
<dbReference type="SMR" id="A4STS4"/>
<dbReference type="STRING" id="29491.GCA_000820065_00560"/>
<dbReference type="KEGG" id="asa:ASA_4381"/>
<dbReference type="eggNOG" id="COG0486">
    <property type="taxonomic scope" value="Bacteria"/>
</dbReference>
<dbReference type="HOGENOM" id="CLU_019624_4_1_6"/>
<dbReference type="Proteomes" id="UP000000225">
    <property type="component" value="Chromosome"/>
</dbReference>
<dbReference type="GO" id="GO:0005829">
    <property type="term" value="C:cytosol"/>
    <property type="evidence" value="ECO:0007669"/>
    <property type="project" value="TreeGrafter"/>
</dbReference>
<dbReference type="GO" id="GO:0005525">
    <property type="term" value="F:GTP binding"/>
    <property type="evidence" value="ECO:0007669"/>
    <property type="project" value="UniProtKB-UniRule"/>
</dbReference>
<dbReference type="GO" id="GO:0003924">
    <property type="term" value="F:GTPase activity"/>
    <property type="evidence" value="ECO:0007669"/>
    <property type="project" value="UniProtKB-UniRule"/>
</dbReference>
<dbReference type="GO" id="GO:0046872">
    <property type="term" value="F:metal ion binding"/>
    <property type="evidence" value="ECO:0007669"/>
    <property type="project" value="UniProtKB-KW"/>
</dbReference>
<dbReference type="GO" id="GO:0030488">
    <property type="term" value="P:tRNA methylation"/>
    <property type="evidence" value="ECO:0007669"/>
    <property type="project" value="TreeGrafter"/>
</dbReference>
<dbReference type="GO" id="GO:0002098">
    <property type="term" value="P:tRNA wobble uridine modification"/>
    <property type="evidence" value="ECO:0007669"/>
    <property type="project" value="TreeGrafter"/>
</dbReference>
<dbReference type="CDD" id="cd04164">
    <property type="entry name" value="trmE"/>
    <property type="match status" value="1"/>
</dbReference>
<dbReference type="CDD" id="cd14858">
    <property type="entry name" value="TrmE_N"/>
    <property type="match status" value="1"/>
</dbReference>
<dbReference type="FunFam" id="3.30.1360.120:FF:000001">
    <property type="entry name" value="tRNA modification GTPase MnmE"/>
    <property type="match status" value="1"/>
</dbReference>
<dbReference type="FunFam" id="3.40.50.300:FF:000249">
    <property type="entry name" value="tRNA modification GTPase MnmE"/>
    <property type="match status" value="1"/>
</dbReference>
<dbReference type="Gene3D" id="3.40.50.300">
    <property type="entry name" value="P-loop containing nucleotide triphosphate hydrolases"/>
    <property type="match status" value="1"/>
</dbReference>
<dbReference type="Gene3D" id="3.30.1360.120">
    <property type="entry name" value="Probable tRNA modification gtpase trme, domain 1"/>
    <property type="match status" value="1"/>
</dbReference>
<dbReference type="Gene3D" id="1.20.120.430">
    <property type="entry name" value="tRNA modification GTPase MnmE domain 2"/>
    <property type="match status" value="1"/>
</dbReference>
<dbReference type="HAMAP" id="MF_00379">
    <property type="entry name" value="GTPase_MnmE"/>
    <property type="match status" value="1"/>
</dbReference>
<dbReference type="InterPro" id="IPR031168">
    <property type="entry name" value="G_TrmE"/>
</dbReference>
<dbReference type="InterPro" id="IPR006073">
    <property type="entry name" value="GTP-bd"/>
</dbReference>
<dbReference type="InterPro" id="IPR018948">
    <property type="entry name" value="GTP-bd_TrmE_N"/>
</dbReference>
<dbReference type="InterPro" id="IPR004520">
    <property type="entry name" value="GTPase_MnmE"/>
</dbReference>
<dbReference type="InterPro" id="IPR027368">
    <property type="entry name" value="MnmE_dom2"/>
</dbReference>
<dbReference type="InterPro" id="IPR025867">
    <property type="entry name" value="MnmE_helical"/>
</dbReference>
<dbReference type="InterPro" id="IPR027417">
    <property type="entry name" value="P-loop_NTPase"/>
</dbReference>
<dbReference type="InterPro" id="IPR005225">
    <property type="entry name" value="Small_GTP-bd"/>
</dbReference>
<dbReference type="InterPro" id="IPR027266">
    <property type="entry name" value="TrmE/GcvT_dom1"/>
</dbReference>
<dbReference type="NCBIfam" id="TIGR00450">
    <property type="entry name" value="mnmE_trmE_thdF"/>
    <property type="match status" value="1"/>
</dbReference>
<dbReference type="NCBIfam" id="NF003661">
    <property type="entry name" value="PRK05291.1-3"/>
    <property type="match status" value="1"/>
</dbReference>
<dbReference type="NCBIfam" id="TIGR00231">
    <property type="entry name" value="small_GTP"/>
    <property type="match status" value="1"/>
</dbReference>
<dbReference type="PANTHER" id="PTHR42714">
    <property type="entry name" value="TRNA MODIFICATION GTPASE GTPBP3"/>
    <property type="match status" value="1"/>
</dbReference>
<dbReference type="PANTHER" id="PTHR42714:SF2">
    <property type="entry name" value="TRNA MODIFICATION GTPASE GTPBP3, MITOCHONDRIAL"/>
    <property type="match status" value="1"/>
</dbReference>
<dbReference type="Pfam" id="PF01926">
    <property type="entry name" value="MMR_HSR1"/>
    <property type="match status" value="1"/>
</dbReference>
<dbReference type="Pfam" id="PF12631">
    <property type="entry name" value="MnmE_helical"/>
    <property type="match status" value="1"/>
</dbReference>
<dbReference type="Pfam" id="PF10396">
    <property type="entry name" value="TrmE_N"/>
    <property type="match status" value="1"/>
</dbReference>
<dbReference type="SUPFAM" id="SSF52540">
    <property type="entry name" value="P-loop containing nucleoside triphosphate hydrolases"/>
    <property type="match status" value="1"/>
</dbReference>
<dbReference type="SUPFAM" id="SSF116878">
    <property type="entry name" value="TrmE connector domain"/>
    <property type="match status" value="1"/>
</dbReference>
<dbReference type="PROSITE" id="PS51709">
    <property type="entry name" value="G_TRME"/>
    <property type="match status" value="1"/>
</dbReference>
<organism>
    <name type="scientific">Aeromonas salmonicida (strain A449)</name>
    <dbReference type="NCBI Taxonomy" id="382245"/>
    <lineage>
        <taxon>Bacteria</taxon>
        <taxon>Pseudomonadati</taxon>
        <taxon>Pseudomonadota</taxon>
        <taxon>Gammaproteobacteria</taxon>
        <taxon>Aeromonadales</taxon>
        <taxon>Aeromonadaceae</taxon>
        <taxon>Aeromonas</taxon>
    </lineage>
</organism>
<sequence>MTTDTIVAQATAPGRGGVGIVRVSGPAAEQVAEIVLGKLPRVRYAEYLPFKDEQGQPLDQGIALLFKAPNSFTGEDVLELQGHGGPVIMDMLVRRILQIKGLRPARPGEFSERAFMNDKLDLAQAEAIADLIEASSEQAARSAMHSLQGQFSSKIQQLVESLIRLRIYVEAAIDFPDEEIDFLSDGKVAGDLYAIMAELDGVRSEAKQGALLREGMKVVIAGRPNAGKSSLLNALAGRESAIVTEIAGTTRDVLREHIHLDGMPLHIIDTAGLRDTLDKVEQIGIERAWAEIEQADRVLFMVDGTTTDAIDPREIWPEFVDRLPKDIGLTVVRNKADLTGEDLAPSQELGHAVYRISAKTELGLPALREHLKACMGFQGNTEGGFMARRRHLDALERAAERLLVAKDQLEIYVAGELVAEELRLAQESLSEITGEFSSDDLLGRIFSSFCIGK</sequence>
<reference key="1">
    <citation type="journal article" date="2008" name="BMC Genomics">
        <title>The genome of Aeromonas salmonicida subsp. salmonicida A449: insights into the evolution of a fish pathogen.</title>
        <authorList>
            <person name="Reith M.E."/>
            <person name="Singh R.K."/>
            <person name="Curtis B."/>
            <person name="Boyd J.M."/>
            <person name="Bouevitch A."/>
            <person name="Kimball J."/>
            <person name="Munholland J."/>
            <person name="Murphy C."/>
            <person name="Sarty D."/>
            <person name="Williams J."/>
            <person name="Nash J.H."/>
            <person name="Johnson S.C."/>
            <person name="Brown L.L."/>
        </authorList>
    </citation>
    <scope>NUCLEOTIDE SEQUENCE [LARGE SCALE GENOMIC DNA]</scope>
    <source>
        <strain>A449</strain>
    </source>
</reference>
<proteinExistence type="inferred from homology"/>
<name>MNME_AERS4</name>
<comment type="function">
    <text evidence="1">Exhibits a very high intrinsic GTPase hydrolysis rate. Involved in the addition of a carboxymethylaminomethyl (cmnm) group at the wobble position (U34) of certain tRNAs, forming tRNA-cmnm(5)s(2)U34.</text>
</comment>
<comment type="cofactor">
    <cofactor evidence="1">
        <name>K(+)</name>
        <dbReference type="ChEBI" id="CHEBI:29103"/>
    </cofactor>
    <text evidence="1">Binds 1 potassium ion per subunit.</text>
</comment>
<comment type="subunit">
    <text evidence="1">Homodimer. Heterotetramer of two MnmE and two MnmG subunits.</text>
</comment>
<comment type="subcellular location">
    <subcellularLocation>
        <location evidence="1">Cytoplasm</location>
    </subcellularLocation>
</comment>
<comment type="similarity">
    <text evidence="1">Belongs to the TRAFAC class TrmE-Era-EngA-EngB-Septin-like GTPase superfamily. TrmE GTPase family.</text>
</comment>